<dbReference type="EC" id="3.2.2.30" evidence="2"/>
<dbReference type="EC" id="3.2.2.9" evidence="2"/>
<dbReference type="EMBL" id="AL111168">
    <property type="protein sequence ID" value="CAL34288.1"/>
    <property type="molecule type" value="Genomic_DNA"/>
</dbReference>
<dbReference type="PIR" id="E81428">
    <property type="entry name" value="E81428"/>
</dbReference>
<dbReference type="RefSeq" id="WP_002859787.1">
    <property type="nucleotide sequence ID" value="NZ_SZUC01000005.1"/>
</dbReference>
<dbReference type="RefSeq" id="YP_002343577.1">
    <property type="nucleotide sequence ID" value="NC_002163.1"/>
</dbReference>
<dbReference type="PDB" id="6AYM">
    <property type="method" value="X-ray"/>
    <property type="resolution" value="1.25 A"/>
    <property type="chains" value="A/B=2-229"/>
</dbReference>
<dbReference type="PDB" id="6AYO">
    <property type="method" value="X-ray"/>
    <property type="resolution" value="1.67 A"/>
    <property type="chains" value="A/B=2-229"/>
</dbReference>
<dbReference type="PDB" id="6AYQ">
    <property type="method" value="X-ray"/>
    <property type="resolution" value="1.42 A"/>
    <property type="chains" value="A/B=2-229"/>
</dbReference>
<dbReference type="PDB" id="6AYR">
    <property type="method" value="X-ray"/>
    <property type="resolution" value="1.95 A"/>
    <property type="chains" value="A/B/C/D=2-229"/>
</dbReference>
<dbReference type="PDB" id="6AYS">
    <property type="method" value="X-ray"/>
    <property type="resolution" value="1.70 A"/>
    <property type="chains" value="A/B/C/D/E/F/G/H=2-229"/>
</dbReference>
<dbReference type="PDB" id="6AYT">
    <property type="method" value="X-ray"/>
    <property type="resolution" value="1.85 A"/>
    <property type="chains" value="A/B/C/D=2-229"/>
</dbReference>
<dbReference type="PDBsum" id="6AYM"/>
<dbReference type="PDBsum" id="6AYO"/>
<dbReference type="PDBsum" id="6AYQ"/>
<dbReference type="PDBsum" id="6AYR"/>
<dbReference type="PDBsum" id="6AYS"/>
<dbReference type="PDBsum" id="6AYT"/>
<dbReference type="SMR" id="Q0PC20"/>
<dbReference type="IntAct" id="Q0PC20">
    <property type="interactions" value="26"/>
</dbReference>
<dbReference type="STRING" id="192222.Cj0117"/>
<dbReference type="PaxDb" id="192222-Cj0117"/>
<dbReference type="EnsemblBacteria" id="CAL34288">
    <property type="protein sequence ID" value="CAL34288"/>
    <property type="gene ID" value="Cj0117"/>
</dbReference>
<dbReference type="GeneID" id="904448"/>
<dbReference type="KEGG" id="cje:Cj0117"/>
<dbReference type="PATRIC" id="fig|192222.6.peg.115"/>
<dbReference type="eggNOG" id="COG0775">
    <property type="taxonomic scope" value="Bacteria"/>
</dbReference>
<dbReference type="HOGENOM" id="CLU_031248_2_0_7"/>
<dbReference type="OrthoDB" id="9792278at2"/>
<dbReference type="BioCyc" id="MetaCyc:MONOMER-16549"/>
<dbReference type="BRENDA" id="3.2.2.26">
    <property type="organism ID" value="13746"/>
</dbReference>
<dbReference type="BRENDA" id="3.2.2.30">
    <property type="organism ID" value="1087"/>
</dbReference>
<dbReference type="BRENDA" id="3.2.2.9">
    <property type="organism ID" value="1087"/>
</dbReference>
<dbReference type="UniPathway" id="UPA00079"/>
<dbReference type="UniPathway" id="UPA00904">
    <property type="reaction ID" value="UER00871"/>
</dbReference>
<dbReference type="Proteomes" id="UP000000799">
    <property type="component" value="Chromosome"/>
</dbReference>
<dbReference type="GO" id="GO:0005829">
    <property type="term" value="C:cytosol"/>
    <property type="evidence" value="ECO:0007669"/>
    <property type="project" value="TreeGrafter"/>
</dbReference>
<dbReference type="GO" id="GO:0102246">
    <property type="term" value="F:6-amino-6-deoxyfutalosine hydrolase activity"/>
    <property type="evidence" value="ECO:0007669"/>
    <property type="project" value="UniProtKB-EC"/>
</dbReference>
<dbReference type="GO" id="GO:0008782">
    <property type="term" value="F:adenosylhomocysteine nucleosidase activity"/>
    <property type="evidence" value="ECO:0007669"/>
    <property type="project" value="UniProtKB-EC"/>
</dbReference>
<dbReference type="GO" id="GO:0008930">
    <property type="term" value="F:methylthioadenosine nucleosidase activity"/>
    <property type="evidence" value="ECO:0007669"/>
    <property type="project" value="InterPro"/>
</dbReference>
<dbReference type="GO" id="GO:0019509">
    <property type="term" value="P:L-methionine salvage from methylthioadenosine"/>
    <property type="evidence" value="ECO:0007669"/>
    <property type="project" value="UniProtKB-UniPathway"/>
</dbReference>
<dbReference type="GO" id="GO:0019284">
    <property type="term" value="P:L-methionine salvage from S-adenosylmethionine"/>
    <property type="evidence" value="ECO:0007669"/>
    <property type="project" value="TreeGrafter"/>
</dbReference>
<dbReference type="GO" id="GO:0009234">
    <property type="term" value="P:menaquinone biosynthetic process"/>
    <property type="evidence" value="ECO:0007669"/>
    <property type="project" value="UniProtKB-UniPathway"/>
</dbReference>
<dbReference type="GO" id="GO:0009164">
    <property type="term" value="P:nucleoside catabolic process"/>
    <property type="evidence" value="ECO:0007669"/>
    <property type="project" value="InterPro"/>
</dbReference>
<dbReference type="CDD" id="cd09008">
    <property type="entry name" value="MTAN"/>
    <property type="match status" value="1"/>
</dbReference>
<dbReference type="Gene3D" id="3.40.50.1580">
    <property type="entry name" value="Nucleoside phosphorylase domain"/>
    <property type="match status" value="1"/>
</dbReference>
<dbReference type="InterPro" id="IPR010049">
    <property type="entry name" value="MTA_SAH_Nsdase"/>
</dbReference>
<dbReference type="InterPro" id="IPR000845">
    <property type="entry name" value="Nucleoside_phosphorylase_d"/>
</dbReference>
<dbReference type="InterPro" id="IPR035994">
    <property type="entry name" value="Nucleoside_phosphorylase_sf"/>
</dbReference>
<dbReference type="NCBIfam" id="TIGR01704">
    <property type="entry name" value="MTA_SAH-Nsdase"/>
    <property type="match status" value="1"/>
</dbReference>
<dbReference type="NCBIfam" id="NF004079">
    <property type="entry name" value="PRK05584.1"/>
    <property type="match status" value="1"/>
</dbReference>
<dbReference type="PANTHER" id="PTHR46832">
    <property type="entry name" value="5'-METHYLTHIOADENOSINE/S-ADENOSYLHOMOCYSTEINE NUCLEOSIDASE"/>
    <property type="match status" value="1"/>
</dbReference>
<dbReference type="PANTHER" id="PTHR46832:SF1">
    <property type="entry name" value="5'-METHYLTHIOADENOSINE_S-ADENOSYLHOMOCYSTEINE NUCLEOSIDASE"/>
    <property type="match status" value="1"/>
</dbReference>
<dbReference type="Pfam" id="PF01048">
    <property type="entry name" value="PNP_UDP_1"/>
    <property type="match status" value="1"/>
</dbReference>
<dbReference type="SUPFAM" id="SSF53167">
    <property type="entry name" value="Purine and uridine phosphorylases"/>
    <property type="match status" value="1"/>
</dbReference>
<accession>Q0PC20</accession>
<keyword id="KW-0002">3D-structure</keyword>
<keyword id="KW-0028">Amino-acid biosynthesis</keyword>
<keyword id="KW-0378">Hydrolase</keyword>
<keyword id="KW-0474">Menaquinone biosynthesis</keyword>
<keyword id="KW-0486">Methionine biosynthesis</keyword>
<keyword id="KW-1185">Reference proteome</keyword>
<organism>
    <name type="scientific">Campylobacter jejuni subsp. jejuni serotype O:2 (strain ATCC 700819 / NCTC 11168)</name>
    <dbReference type="NCBI Taxonomy" id="192222"/>
    <lineage>
        <taxon>Bacteria</taxon>
        <taxon>Pseudomonadati</taxon>
        <taxon>Campylobacterota</taxon>
        <taxon>Epsilonproteobacteria</taxon>
        <taxon>Campylobacterales</taxon>
        <taxon>Campylobacteraceae</taxon>
        <taxon>Campylobacter</taxon>
    </lineage>
</organism>
<reference key="1">
    <citation type="journal article" date="2000" name="Nature">
        <title>The genome sequence of the food-borne pathogen Campylobacter jejuni reveals hypervariable sequences.</title>
        <authorList>
            <person name="Parkhill J."/>
            <person name="Wren B.W."/>
            <person name="Mungall K.L."/>
            <person name="Ketley J.M."/>
            <person name="Churcher C.M."/>
            <person name="Basham D."/>
            <person name="Chillingworth T."/>
            <person name="Davies R.M."/>
            <person name="Feltwell T."/>
            <person name="Holroyd S."/>
            <person name="Jagels K."/>
            <person name="Karlyshev A.V."/>
            <person name="Moule S."/>
            <person name="Pallen M.J."/>
            <person name="Penn C.W."/>
            <person name="Quail M.A."/>
            <person name="Rajandream M.A."/>
            <person name="Rutherford K.M."/>
            <person name="van Vliet A.H.M."/>
            <person name="Whitehead S."/>
            <person name="Barrell B.G."/>
        </authorList>
    </citation>
    <scope>NUCLEOTIDE SEQUENCE [LARGE SCALE GENOMIC DNA]</scope>
    <source>
        <strain>ATCC 700819 / NCTC 11168</strain>
    </source>
</reference>
<reference key="2">
    <citation type="journal article" date="2011" name="J. Biol. Chem.">
        <title>5'-methylthioadenosine nucleosidase is implicated in playing a key role in a modified futalosine pathway for menaquinone biosynthesis in Campylobacter jejuni.</title>
        <authorList>
            <person name="Li X."/>
            <person name="Apel D."/>
            <person name="Gaynor E.C."/>
            <person name="Tanner M.E."/>
        </authorList>
    </citation>
    <scope>FUNCTION AS AFL AND MTA NUCLEOSIDASE</scope>
    <scope>CATALYTIC ACTIVITY</scope>
    <scope>SUBSTRATE SPECIFICITY</scope>
    <scope>MENAQUINONE BIOSYNTHESIS PATHWAY</scope>
    <source>
        <strain>ATCC 700819 / NCTC 11168</strain>
    </source>
</reference>
<gene>
    <name type="primary">pfs</name>
    <name type="ordered locus">Cj0117</name>
</gene>
<protein>
    <recommendedName>
        <fullName>Aminodeoxyfutalosine nucleosidase</fullName>
        <shortName>AFL nucleosidase</shortName>
        <shortName>Aminofutalosine nucleosidase</shortName>
        <ecNumber evidence="2">3.2.2.30</ecNumber>
    </recommendedName>
    <alternativeName>
        <fullName>5'-methylthioadenosine/S-adenosylhomocysteine nucleosidase</fullName>
        <shortName>MTA/SAH nucleosidase</shortName>
        <shortName>MTAN</shortName>
        <ecNumber evidence="2">3.2.2.9</ecNumber>
    </alternativeName>
    <alternativeName>
        <fullName>6-amino-6-deoxyfutalosine N-ribosylhydrolase</fullName>
    </alternativeName>
</protein>
<evidence type="ECO:0000250" key="1"/>
<evidence type="ECO:0000269" key="2">
    <source>
    </source>
</evidence>
<evidence type="ECO:0000305" key="3"/>
<evidence type="ECO:0007829" key="4">
    <source>
        <dbReference type="PDB" id="6AYM"/>
    </source>
</evidence>
<evidence type="ECO:0007829" key="5">
    <source>
        <dbReference type="PDB" id="6AYQ"/>
    </source>
</evidence>
<sequence>MMKIAILGAMSEEITPLLETLKDYTKIEHANNTYYFAKYKNHELVLAYSKIGKVNSTLSASVMIEKFGAQALLFTGVAGAFNPELEIGDLLYATKLAQYDLDITAFGHPLGFVPGNEIFIKTDEKLNNLALEVAKELNIKLRAGIIATGDEFICDEAKKAKIREIFNADACEMEGASVALVCDALKVPCFILRAMSDKAGEKAEFDFDEFVINSAKISANFVLKMCEKL</sequence>
<feature type="chain" id="PRO_0000425136" description="Aminodeoxyfutalosine nucleosidase">
    <location>
        <begin position="1"/>
        <end position="229"/>
    </location>
</feature>
<feature type="active site" description="Proton acceptor" evidence="1">
    <location>
        <position position="13"/>
    </location>
</feature>
<feature type="active site" description="Proton donor" evidence="1">
    <location>
        <position position="197"/>
    </location>
</feature>
<feature type="binding site" evidence="1">
    <location>
        <position position="79"/>
    </location>
    <ligand>
        <name>substrate</name>
    </ligand>
</feature>
<feature type="binding site" evidence="1">
    <location>
        <position position="153"/>
    </location>
    <ligand>
        <name>substrate</name>
    </ligand>
</feature>
<feature type="binding site" evidence="1">
    <location>
        <begin position="173"/>
        <end position="174"/>
    </location>
    <ligand>
        <name>substrate</name>
    </ligand>
</feature>
<feature type="strand" evidence="4">
    <location>
        <begin position="4"/>
        <end position="10"/>
    </location>
</feature>
<feature type="helix" evidence="4">
    <location>
        <begin position="11"/>
        <end position="21"/>
    </location>
</feature>
<feature type="strand" evidence="4">
    <location>
        <begin position="25"/>
        <end position="29"/>
    </location>
</feature>
<feature type="strand" evidence="4">
    <location>
        <begin position="32"/>
        <end position="39"/>
    </location>
</feature>
<feature type="strand" evidence="4">
    <location>
        <begin position="42"/>
        <end position="48"/>
    </location>
</feature>
<feature type="helix" evidence="4">
    <location>
        <begin position="53"/>
        <end position="65"/>
    </location>
</feature>
<feature type="strand" evidence="4">
    <location>
        <begin position="70"/>
        <end position="80"/>
    </location>
</feature>
<feature type="strand" evidence="4">
    <location>
        <begin position="90"/>
        <end position="98"/>
    </location>
</feature>
<feature type="helix" evidence="4">
    <location>
        <begin position="104"/>
        <end position="106"/>
    </location>
</feature>
<feature type="strand" evidence="5">
    <location>
        <begin position="118"/>
        <end position="121"/>
    </location>
</feature>
<feature type="helix" evidence="4">
    <location>
        <begin position="124"/>
        <end position="137"/>
    </location>
</feature>
<feature type="strand" evidence="4">
    <location>
        <begin position="141"/>
        <end position="148"/>
    </location>
</feature>
<feature type="helix" evidence="4">
    <location>
        <begin position="156"/>
        <end position="166"/>
    </location>
</feature>
<feature type="strand" evidence="4">
    <location>
        <begin position="169"/>
        <end position="174"/>
    </location>
</feature>
<feature type="helix" evidence="4">
    <location>
        <begin position="175"/>
        <end position="184"/>
    </location>
</feature>
<feature type="strand" evidence="4">
    <location>
        <begin position="189"/>
        <end position="197"/>
    </location>
</feature>
<feature type="helix" evidence="4">
    <location>
        <begin position="207"/>
        <end position="228"/>
    </location>
</feature>
<name>MQMTN_CAMJE</name>
<comment type="function">
    <text evidence="2">Catalyzes the direct conversion of aminodeoxyfutalosine (AFL) into dehypoxanthine futalosine (DHFL) and adenine via the hydrolysis of the N-glycosidic bond; this reaction seems to represent an essential step in the menaquinone biosynthesis pathway in Campylobacter species. Also catalyzes the hydrolysis of 5'-methylthioadenosine (MTA) to adenine and 5'-methylthioribose. Can also probably use S-adenosylhomocysteine (SAH) as substrate, leading to adenine and S-ribosylhomocysteine. These other activities highlight the tremendous versatility of the enzyme, which also plays key roles in S-adenosylmethionine recycling and in the biosynthesis of the quorum-sensing molecule autoinducer-2. Shows negligible activity with futalosine (FL) as substrate.</text>
</comment>
<comment type="catalytic activity">
    <reaction evidence="2">
        <text>6-amino-6-deoxyfutalosine + H2O = dehypoxanthine futalosine + adenine</text>
        <dbReference type="Rhea" id="RHEA:33079"/>
        <dbReference type="ChEBI" id="CHEBI:15377"/>
        <dbReference type="ChEBI" id="CHEBI:16708"/>
        <dbReference type="ChEBI" id="CHEBI:58864"/>
        <dbReference type="ChEBI" id="CHEBI:64286"/>
        <dbReference type="EC" id="3.2.2.30"/>
    </reaction>
</comment>
<comment type="catalytic activity">
    <reaction evidence="2">
        <text>S-adenosyl-L-homocysteine + H2O = S-(5-deoxy-D-ribos-5-yl)-L-homocysteine + adenine</text>
        <dbReference type="Rhea" id="RHEA:17805"/>
        <dbReference type="ChEBI" id="CHEBI:15377"/>
        <dbReference type="ChEBI" id="CHEBI:16708"/>
        <dbReference type="ChEBI" id="CHEBI:57856"/>
        <dbReference type="ChEBI" id="CHEBI:58195"/>
        <dbReference type="EC" id="3.2.2.9"/>
    </reaction>
</comment>
<comment type="catalytic activity">
    <reaction evidence="2">
        <text>S-methyl-5'-thioadenosine + H2O = 5-(methylsulfanyl)-D-ribose + adenine</text>
        <dbReference type="Rhea" id="RHEA:13617"/>
        <dbReference type="ChEBI" id="CHEBI:15377"/>
        <dbReference type="ChEBI" id="CHEBI:16708"/>
        <dbReference type="ChEBI" id="CHEBI:17509"/>
        <dbReference type="ChEBI" id="CHEBI:78440"/>
        <dbReference type="EC" id="3.2.2.9"/>
    </reaction>
</comment>
<comment type="catalytic activity">
    <reaction evidence="2">
        <text>5'-deoxyadenosine + H2O = 5-deoxy-D-ribose + adenine</text>
        <dbReference type="Rhea" id="RHEA:29859"/>
        <dbReference type="ChEBI" id="CHEBI:15377"/>
        <dbReference type="ChEBI" id="CHEBI:16708"/>
        <dbReference type="ChEBI" id="CHEBI:17319"/>
        <dbReference type="ChEBI" id="CHEBI:149540"/>
        <dbReference type="EC" id="3.2.2.9"/>
    </reaction>
</comment>
<comment type="biophysicochemical properties">
    <kinetics>
        <KM>1.03 uM for aminodeoxyfutalosine</KM>
        <KM>0.93 uM for 5'-methylthioadenosine</KM>
        <text>kcat is 0.53 sec(-1) with aminodeoxyfutalosine as substrate. kcat is 2.7 sec(-1) with 5'-methylthioadenosine as substrate.</text>
    </kinetics>
</comment>
<comment type="pathway">
    <text>Quinol/quinone metabolism; menaquinone biosynthesis.</text>
</comment>
<comment type="pathway">
    <text>Amino-acid biosynthesis; L-methionine biosynthesis via salvage pathway; S-methyl-5-thio-alpha-D-ribose 1-phosphate from S-methyl-5'-thioadenosine (hydrolase route): step 1/2.</text>
</comment>
<comment type="subunit">
    <text evidence="1">Homodimer.</text>
</comment>
<comment type="similarity">
    <text evidence="3">Belongs to the PNP/UDP phosphorylase family.</text>
</comment>
<proteinExistence type="evidence at protein level"/>